<name>YFBV_ECO5E</name>
<sequence length="151" mass="17213">MSTPDNRSVNFFSLFRRGQHYSKTWPLEKRLAPVFVENRVIKMTRYAIRFMPPIAVFTLCWQIALGGQLGPAVATALFALSLPMQGLWWLGKRSVTPLPPAILNWFYEVRGKLQESGQVLAPVEGKPDYQALADTLKRAFKQLDKTFLDDL</sequence>
<feature type="chain" id="PRO_1000136985" description="UPF0208 membrane protein YfbV">
    <location>
        <begin position="1"/>
        <end position="151"/>
    </location>
</feature>
<feature type="transmembrane region" description="Helical" evidence="1">
    <location>
        <begin position="46"/>
        <end position="65"/>
    </location>
</feature>
<feature type="transmembrane region" description="Helical" evidence="1">
    <location>
        <begin position="69"/>
        <end position="91"/>
    </location>
</feature>
<accession>B5YXT5</accession>
<organism>
    <name type="scientific">Escherichia coli O157:H7 (strain EC4115 / EHEC)</name>
    <dbReference type="NCBI Taxonomy" id="444450"/>
    <lineage>
        <taxon>Bacteria</taxon>
        <taxon>Pseudomonadati</taxon>
        <taxon>Pseudomonadota</taxon>
        <taxon>Gammaproteobacteria</taxon>
        <taxon>Enterobacterales</taxon>
        <taxon>Enterobacteriaceae</taxon>
        <taxon>Escherichia</taxon>
    </lineage>
</organism>
<proteinExistence type="inferred from homology"/>
<reference key="1">
    <citation type="journal article" date="2011" name="Proc. Natl. Acad. Sci. U.S.A.">
        <title>Genomic anatomy of Escherichia coli O157:H7 outbreaks.</title>
        <authorList>
            <person name="Eppinger M."/>
            <person name="Mammel M.K."/>
            <person name="Leclerc J.E."/>
            <person name="Ravel J."/>
            <person name="Cebula T.A."/>
        </authorList>
    </citation>
    <scope>NUCLEOTIDE SEQUENCE [LARGE SCALE GENOMIC DNA]</scope>
    <source>
        <strain>EC4115 / EHEC</strain>
    </source>
</reference>
<keyword id="KW-0997">Cell inner membrane</keyword>
<keyword id="KW-1003">Cell membrane</keyword>
<keyword id="KW-0472">Membrane</keyword>
<keyword id="KW-0812">Transmembrane</keyword>
<keyword id="KW-1133">Transmembrane helix</keyword>
<comment type="subcellular location">
    <subcellularLocation>
        <location evidence="1">Cell inner membrane</location>
        <topology evidence="1">Multi-pass membrane protein</topology>
    </subcellularLocation>
</comment>
<comment type="similarity">
    <text evidence="1">Belongs to the UPF0208 family.</text>
</comment>
<evidence type="ECO:0000255" key="1">
    <source>
        <dbReference type="HAMAP-Rule" id="MF_01101"/>
    </source>
</evidence>
<gene>
    <name evidence="1" type="primary">yfbV</name>
    <name type="ordered locus">ECH74115_3434</name>
</gene>
<protein>
    <recommendedName>
        <fullName evidence="1">UPF0208 membrane protein YfbV</fullName>
    </recommendedName>
</protein>
<dbReference type="EMBL" id="CP001164">
    <property type="protein sequence ID" value="ACI35799.1"/>
    <property type="molecule type" value="Genomic_DNA"/>
</dbReference>
<dbReference type="RefSeq" id="WP_000106627.1">
    <property type="nucleotide sequence ID" value="NC_011353.1"/>
</dbReference>
<dbReference type="GeneID" id="93774879"/>
<dbReference type="KEGG" id="ecf:ECH74115_3434"/>
<dbReference type="HOGENOM" id="CLU_128746_0_0_6"/>
<dbReference type="GO" id="GO:0005886">
    <property type="term" value="C:plasma membrane"/>
    <property type="evidence" value="ECO:0007669"/>
    <property type="project" value="UniProtKB-SubCell"/>
</dbReference>
<dbReference type="HAMAP" id="MF_01101">
    <property type="entry name" value="UPF0208"/>
    <property type="match status" value="1"/>
</dbReference>
<dbReference type="InterPro" id="IPR007334">
    <property type="entry name" value="UPF0208"/>
</dbReference>
<dbReference type="NCBIfam" id="NF002493">
    <property type="entry name" value="PRK01816.1"/>
    <property type="match status" value="1"/>
</dbReference>
<dbReference type="Pfam" id="PF04217">
    <property type="entry name" value="DUF412"/>
    <property type="match status" value="1"/>
</dbReference>